<organism>
    <name type="scientific">Salmonella typhi</name>
    <dbReference type="NCBI Taxonomy" id="90370"/>
    <lineage>
        <taxon>Bacteria</taxon>
        <taxon>Pseudomonadati</taxon>
        <taxon>Pseudomonadota</taxon>
        <taxon>Gammaproteobacteria</taxon>
        <taxon>Enterobacterales</taxon>
        <taxon>Enterobacteriaceae</taxon>
        <taxon>Salmonella</taxon>
    </lineage>
</organism>
<feature type="chain" id="PRO_0000234024" description="HTH-type transcriptional regulator UlaR">
    <location>
        <begin position="1"/>
        <end position="251"/>
    </location>
</feature>
<feature type="domain" description="HTH deoR-type" evidence="1">
    <location>
        <begin position="3"/>
        <end position="58"/>
    </location>
</feature>
<feature type="DNA-binding region" description="H-T-H motif" evidence="1">
    <location>
        <begin position="20"/>
        <end position="39"/>
    </location>
</feature>
<accession>Q8XG96</accession>
<accession>Q7ALQ0</accession>
<evidence type="ECO:0000255" key="1">
    <source>
        <dbReference type="HAMAP-Rule" id="MF_01563"/>
    </source>
</evidence>
<comment type="function">
    <text evidence="1">Represses ulaG and the ulaABCDEF operon.</text>
</comment>
<comment type="subcellular location">
    <subcellularLocation>
        <location evidence="1">Cytoplasm</location>
    </subcellularLocation>
</comment>
<sequence>MTEAQRHQILLDMLAQLGFVTVENVIERLGISPATARRDINKLDESGKLKKVRNGAEAITQQRPRWTPMNLHQAQNHDEKVRIAKAASQLVNPGESVVINCGSTAFLLGREMCGKPVQIITNYLPLANYLIDQEHDSVIIMGGQYNKSQSITLSPQGSENSLYAGHWMFTSGKGLTADGLYKTDMLTAMAEQKMLSVVGKLVALVDSSKIGERAGMLFSRADQIAMLITGKNANPQVLQQLEAQGVSILRV</sequence>
<reference key="1">
    <citation type="journal article" date="2001" name="Nature">
        <title>Complete genome sequence of a multiple drug resistant Salmonella enterica serovar Typhi CT18.</title>
        <authorList>
            <person name="Parkhill J."/>
            <person name="Dougan G."/>
            <person name="James K.D."/>
            <person name="Thomson N.R."/>
            <person name="Pickard D."/>
            <person name="Wain J."/>
            <person name="Churcher C.M."/>
            <person name="Mungall K.L."/>
            <person name="Bentley S.D."/>
            <person name="Holden M.T.G."/>
            <person name="Sebaihia M."/>
            <person name="Baker S."/>
            <person name="Basham D."/>
            <person name="Brooks K."/>
            <person name="Chillingworth T."/>
            <person name="Connerton P."/>
            <person name="Cronin A."/>
            <person name="Davis P."/>
            <person name="Davies R.M."/>
            <person name="Dowd L."/>
            <person name="White N."/>
            <person name="Farrar J."/>
            <person name="Feltwell T."/>
            <person name="Hamlin N."/>
            <person name="Haque A."/>
            <person name="Hien T.T."/>
            <person name="Holroyd S."/>
            <person name="Jagels K."/>
            <person name="Krogh A."/>
            <person name="Larsen T.S."/>
            <person name="Leather S."/>
            <person name="Moule S."/>
            <person name="O'Gaora P."/>
            <person name="Parry C."/>
            <person name="Quail M.A."/>
            <person name="Rutherford K.M."/>
            <person name="Simmonds M."/>
            <person name="Skelton J."/>
            <person name="Stevens K."/>
            <person name="Whitehead S."/>
            <person name="Barrell B.G."/>
        </authorList>
    </citation>
    <scope>NUCLEOTIDE SEQUENCE [LARGE SCALE GENOMIC DNA]</scope>
    <source>
        <strain>CT18</strain>
    </source>
</reference>
<reference key="2">
    <citation type="journal article" date="2003" name="J. Bacteriol.">
        <title>Comparative genomics of Salmonella enterica serovar Typhi strains Ty2 and CT18.</title>
        <authorList>
            <person name="Deng W."/>
            <person name="Liou S.-R."/>
            <person name="Plunkett G. III"/>
            <person name="Mayhew G.F."/>
            <person name="Rose D.J."/>
            <person name="Burland V."/>
            <person name="Kodoyianni V."/>
            <person name="Schwartz D.C."/>
            <person name="Blattner F.R."/>
        </authorList>
    </citation>
    <scope>NUCLEOTIDE SEQUENCE [LARGE SCALE GENOMIC DNA]</scope>
    <source>
        <strain>ATCC 700931 / Ty2</strain>
    </source>
</reference>
<dbReference type="EMBL" id="AL513382">
    <property type="protein sequence ID" value="CAD06858.1"/>
    <property type="molecule type" value="Genomic_DNA"/>
</dbReference>
<dbReference type="EMBL" id="AE014613">
    <property type="protein sequence ID" value="AAO71879.1"/>
    <property type="molecule type" value="Genomic_DNA"/>
</dbReference>
<dbReference type="RefSeq" id="NP_458815.1">
    <property type="nucleotide sequence ID" value="NC_003198.1"/>
</dbReference>
<dbReference type="RefSeq" id="WP_000133618.1">
    <property type="nucleotide sequence ID" value="NZ_WSUR01000012.1"/>
</dbReference>
<dbReference type="SMR" id="Q8XG96"/>
<dbReference type="STRING" id="220341.gene:17588558"/>
<dbReference type="KEGG" id="stt:t4432"/>
<dbReference type="KEGG" id="sty:STY4737"/>
<dbReference type="PATRIC" id="fig|220341.7.peg.4838"/>
<dbReference type="eggNOG" id="COG1349">
    <property type="taxonomic scope" value="Bacteria"/>
</dbReference>
<dbReference type="HOGENOM" id="CLU_060699_3_2_6"/>
<dbReference type="OMA" id="FDNDVTR"/>
<dbReference type="OrthoDB" id="9816363at2"/>
<dbReference type="Proteomes" id="UP000000541">
    <property type="component" value="Chromosome"/>
</dbReference>
<dbReference type="Proteomes" id="UP000002670">
    <property type="component" value="Chromosome"/>
</dbReference>
<dbReference type="GO" id="GO:0005737">
    <property type="term" value="C:cytoplasm"/>
    <property type="evidence" value="ECO:0007669"/>
    <property type="project" value="UniProtKB-SubCell"/>
</dbReference>
<dbReference type="GO" id="GO:0003677">
    <property type="term" value="F:DNA binding"/>
    <property type="evidence" value="ECO:0007669"/>
    <property type="project" value="UniProtKB-KW"/>
</dbReference>
<dbReference type="GO" id="GO:0003700">
    <property type="term" value="F:DNA-binding transcription factor activity"/>
    <property type="evidence" value="ECO:0007669"/>
    <property type="project" value="InterPro"/>
</dbReference>
<dbReference type="GO" id="GO:0045892">
    <property type="term" value="P:negative regulation of DNA-templated transcription"/>
    <property type="evidence" value="ECO:0007669"/>
    <property type="project" value="UniProtKB-UniRule"/>
</dbReference>
<dbReference type="FunFam" id="1.10.10.10:FF:000160">
    <property type="entry name" value="HTH-type transcriptional regulator UlaR"/>
    <property type="match status" value="1"/>
</dbReference>
<dbReference type="Gene3D" id="1.10.10.10">
    <property type="entry name" value="Winged helix-like DNA-binding domain superfamily/Winged helix DNA-binding domain"/>
    <property type="match status" value="1"/>
</dbReference>
<dbReference type="HAMAP" id="MF_01563">
    <property type="entry name" value="HTH_type_UlaR"/>
    <property type="match status" value="1"/>
</dbReference>
<dbReference type="InterPro" id="IPR050313">
    <property type="entry name" value="Carb_Metab_HTH_regulators"/>
</dbReference>
<dbReference type="InterPro" id="IPR014036">
    <property type="entry name" value="DeoR-like_C"/>
</dbReference>
<dbReference type="InterPro" id="IPR001034">
    <property type="entry name" value="DeoR_HTH"/>
</dbReference>
<dbReference type="InterPro" id="IPR037171">
    <property type="entry name" value="NagB/RpiA_transferase-like"/>
</dbReference>
<dbReference type="InterPro" id="IPR018356">
    <property type="entry name" value="Tscrpt_reg_HTH_DeoR_CS"/>
</dbReference>
<dbReference type="InterPro" id="IPR023711">
    <property type="entry name" value="Tscrpt_reg_HTH_UlaR"/>
</dbReference>
<dbReference type="InterPro" id="IPR036388">
    <property type="entry name" value="WH-like_DNA-bd_sf"/>
</dbReference>
<dbReference type="InterPro" id="IPR036390">
    <property type="entry name" value="WH_DNA-bd_sf"/>
</dbReference>
<dbReference type="NCBIfam" id="NF010034">
    <property type="entry name" value="PRK13509.1"/>
    <property type="match status" value="1"/>
</dbReference>
<dbReference type="PANTHER" id="PTHR30363">
    <property type="entry name" value="HTH-TYPE TRANSCRIPTIONAL REGULATOR SRLR-RELATED"/>
    <property type="match status" value="1"/>
</dbReference>
<dbReference type="PANTHER" id="PTHR30363:SF55">
    <property type="entry name" value="HTH-TYPE TRANSCRIPTIONAL REGULATOR ULAR"/>
    <property type="match status" value="1"/>
</dbReference>
<dbReference type="Pfam" id="PF00455">
    <property type="entry name" value="DeoRC"/>
    <property type="match status" value="1"/>
</dbReference>
<dbReference type="Pfam" id="PF08220">
    <property type="entry name" value="HTH_DeoR"/>
    <property type="match status" value="1"/>
</dbReference>
<dbReference type="PRINTS" id="PR00037">
    <property type="entry name" value="HTHLACR"/>
</dbReference>
<dbReference type="SMART" id="SM01134">
    <property type="entry name" value="DeoRC"/>
    <property type="match status" value="1"/>
</dbReference>
<dbReference type="SMART" id="SM00420">
    <property type="entry name" value="HTH_DEOR"/>
    <property type="match status" value="1"/>
</dbReference>
<dbReference type="SUPFAM" id="SSF100950">
    <property type="entry name" value="NagB/RpiA/CoA transferase-like"/>
    <property type="match status" value="1"/>
</dbReference>
<dbReference type="SUPFAM" id="SSF46785">
    <property type="entry name" value="Winged helix' DNA-binding domain"/>
    <property type="match status" value="1"/>
</dbReference>
<dbReference type="PROSITE" id="PS00894">
    <property type="entry name" value="HTH_DEOR_1"/>
    <property type="match status" value="1"/>
</dbReference>
<dbReference type="PROSITE" id="PS51000">
    <property type="entry name" value="HTH_DEOR_2"/>
    <property type="match status" value="1"/>
</dbReference>
<keyword id="KW-0963">Cytoplasm</keyword>
<keyword id="KW-0238">DNA-binding</keyword>
<keyword id="KW-0678">Repressor</keyword>
<keyword id="KW-0804">Transcription</keyword>
<keyword id="KW-0805">Transcription regulation</keyword>
<gene>
    <name evidence="1" type="primary">ulaR</name>
    <name type="ordered locus">STY4737</name>
    <name type="ordered locus">t4432</name>
</gene>
<proteinExistence type="inferred from homology"/>
<name>ULAR_SALTI</name>
<protein>
    <recommendedName>
        <fullName evidence="1">HTH-type transcriptional regulator UlaR</fullName>
    </recommendedName>
</protein>